<accession>P47876</accession>
<accession>Q5SVY8</accession>
<accession>Q61732</accession>
<feature type="signal peptide" evidence="1">
    <location>
        <begin position="1"/>
        <end position="25"/>
    </location>
</feature>
<feature type="chain" id="PRO_0000014366" description="Insulin-like growth factor-binding protein 1">
    <location>
        <begin position="26"/>
        <end position="272"/>
    </location>
</feature>
<feature type="domain" description="IGFBP N-terminal" evidence="5">
    <location>
        <begin position="28"/>
        <end position="109"/>
    </location>
</feature>
<feature type="domain" description="Thyroglobulin type-1" evidence="4">
    <location>
        <begin position="186"/>
        <end position="264"/>
    </location>
</feature>
<feature type="short sequence motif" description="Cell attachment site">
    <location>
        <begin position="259"/>
        <end position="261"/>
    </location>
</feature>
<feature type="modified residue" description="Phosphoserine" evidence="2">
    <location>
        <position position="139"/>
    </location>
</feature>
<feature type="modified residue" description="Phosphoserine" evidence="2">
    <location>
        <position position="157"/>
    </location>
</feature>
<feature type="modified residue" description="Phosphoserine" evidence="2">
    <location>
        <position position="169"/>
    </location>
</feature>
<feature type="modified residue" description="Phosphothreonine" evidence="2">
    <location>
        <position position="170"/>
    </location>
</feature>
<feature type="modified residue" description="Phosphotyrosine" evidence="2">
    <location>
        <position position="171"/>
    </location>
</feature>
<feature type="modified residue" description="Phosphoserine" evidence="2">
    <location>
        <position position="255"/>
    </location>
</feature>
<feature type="disulfide bond" evidence="5">
    <location>
        <begin position="32"/>
        <end position="59"/>
    </location>
</feature>
<feature type="disulfide bond" evidence="5">
    <location>
        <begin position="35"/>
        <end position="61"/>
    </location>
</feature>
<feature type="disulfide bond" evidence="5">
    <location>
        <begin position="43"/>
        <end position="62"/>
    </location>
</feature>
<feature type="disulfide bond" evidence="5">
    <location>
        <begin position="50"/>
        <end position="65"/>
    </location>
</feature>
<feature type="disulfide bond" evidence="5">
    <location>
        <begin position="73"/>
        <end position="86"/>
    </location>
</feature>
<feature type="disulfide bond" evidence="5">
    <location>
        <begin position="80"/>
        <end position="106"/>
    </location>
</feature>
<feature type="disulfide bond" evidence="4">
    <location>
        <begin position="189"/>
        <end position="219"/>
    </location>
</feature>
<feature type="disulfide bond" evidence="4">
    <location>
        <begin position="230"/>
        <end position="241"/>
    </location>
</feature>
<feature type="disulfide bond" evidence="4">
    <location>
        <begin position="243"/>
        <end position="264"/>
    </location>
</feature>
<feature type="sequence conflict" description="In Ref. 1; CAA57269." evidence="6" ref="1">
    <original>A</original>
    <variation>V</variation>
    <location>
        <position position="23"/>
    </location>
</feature>
<feature type="sequence conflict" description="In Ref. 4; CAA47832." evidence="6" ref="4">
    <original>CV</original>
    <variation>SL</variation>
    <location>
        <begin position="106"/>
        <end position="107"/>
    </location>
</feature>
<feature type="sequence conflict" description="In Ref. 1; CAA57269." evidence="6" ref="1">
    <original>Q</original>
    <variation>E</variation>
    <location>
        <position position="229"/>
    </location>
</feature>
<proteinExistence type="evidence at transcript level"/>
<evidence type="ECO:0000250" key="1"/>
<evidence type="ECO:0000250" key="2">
    <source>
        <dbReference type="UniProtKB" id="P08833"/>
    </source>
</evidence>
<evidence type="ECO:0000250" key="3">
    <source>
        <dbReference type="UniProtKB" id="P21743"/>
    </source>
</evidence>
<evidence type="ECO:0000255" key="4">
    <source>
        <dbReference type="PROSITE-ProRule" id="PRU00500"/>
    </source>
</evidence>
<evidence type="ECO:0000255" key="5">
    <source>
        <dbReference type="PROSITE-ProRule" id="PRU00653"/>
    </source>
</evidence>
<evidence type="ECO:0000305" key="6"/>
<keyword id="KW-1015">Disulfide bond</keyword>
<keyword id="KW-0340">Growth factor binding</keyword>
<keyword id="KW-0597">Phosphoprotein</keyword>
<keyword id="KW-1185">Reference proteome</keyword>
<keyword id="KW-0964">Secreted</keyword>
<keyword id="KW-0732">Signal</keyword>
<reference key="1">
    <citation type="journal article" date="1994" name="Mol. Cell. Endocrinol.">
        <title>cDNA cloning and mRNA expression of the six mouse insulin-like growth factor binding proteins.</title>
        <authorList>
            <person name="Schuller A.G.P."/>
            <person name="Groffen C."/>
            <person name="van Neck J.W."/>
            <person name="Zwarthoff E.C."/>
            <person name="Drop S.L.S."/>
        </authorList>
    </citation>
    <scope>NUCLEOTIDE SEQUENCE [MRNA]</scope>
    <source>
        <tissue>Liver</tissue>
    </source>
</reference>
<reference key="2">
    <citation type="journal article" date="2009" name="PLoS Biol.">
        <title>Lineage-specific biology revealed by a finished genome assembly of the mouse.</title>
        <authorList>
            <person name="Church D.M."/>
            <person name="Goodstadt L."/>
            <person name="Hillier L.W."/>
            <person name="Zody M.C."/>
            <person name="Goldstein S."/>
            <person name="She X."/>
            <person name="Bult C.J."/>
            <person name="Agarwala R."/>
            <person name="Cherry J.L."/>
            <person name="DiCuccio M."/>
            <person name="Hlavina W."/>
            <person name="Kapustin Y."/>
            <person name="Meric P."/>
            <person name="Maglott D."/>
            <person name="Birtle Z."/>
            <person name="Marques A.C."/>
            <person name="Graves T."/>
            <person name="Zhou S."/>
            <person name="Teague B."/>
            <person name="Potamousis K."/>
            <person name="Churas C."/>
            <person name="Place M."/>
            <person name="Herschleb J."/>
            <person name="Runnheim R."/>
            <person name="Forrest D."/>
            <person name="Amos-Landgraf J."/>
            <person name="Schwartz D.C."/>
            <person name="Cheng Z."/>
            <person name="Lindblad-Toh K."/>
            <person name="Eichler E.E."/>
            <person name="Ponting C.P."/>
        </authorList>
    </citation>
    <scope>NUCLEOTIDE SEQUENCE [LARGE SCALE GENOMIC DNA]</scope>
    <source>
        <strain>C57BL/6J</strain>
    </source>
</reference>
<reference key="3">
    <citation type="submission" date="2005-07" db="EMBL/GenBank/DDBJ databases">
        <authorList>
            <person name="Mural R.J."/>
            <person name="Adams M.D."/>
            <person name="Myers E.W."/>
            <person name="Smith H.O."/>
            <person name="Venter J.C."/>
        </authorList>
    </citation>
    <scope>NUCLEOTIDE SEQUENCE [LARGE SCALE GENOMIC DNA]</scope>
</reference>
<reference key="4">
    <citation type="journal article" date="1994" name="Hepatology">
        <title>Structure and localization of the IGFBP-1 gene and its expression during liver regeneration.</title>
        <authorList>
            <person name="Lee J."/>
            <person name="Greenbaum L."/>
            <person name="Haber B.A."/>
            <person name="Nagle D."/>
            <person name="Lee V."/>
            <person name="Miles V."/>
            <person name="Mohn K.L."/>
            <person name="Bucan M."/>
            <person name="Taub R."/>
        </authorList>
    </citation>
    <scope>NUCLEOTIDE SEQUENCE [GENOMIC DNA] OF 1-124</scope>
    <source>
        <strain>NIH Swiss</strain>
    </source>
</reference>
<protein>
    <recommendedName>
        <fullName>Insulin-like growth factor-binding protein 1</fullName>
        <shortName>IBP-1</shortName>
        <shortName>IGF-binding protein 1</shortName>
        <shortName>IGFBP-1</shortName>
    </recommendedName>
</protein>
<sequence length="272" mass="29570">MPEFLTVVSWPFLILLSFQIGVAAGAPQPWHCAPCTAERLGLCPPVPASCPEISRPAGCGCCPTCALPMGAACGVATARCAQGLSCRALPGEPRPLHALTRGQGACVPEPAAPATSTLFSSQHEEAKAAVVSADELSESPEMTEEQLLDSFHLMAPSREDQPILWNAISTYSSMRAREIADLKKWKEPCQRELYKVLERLAAAQQKAGDEIYKFYLPNCNKNGFYHSKQCETSLDGEAGLCWCVYPWSGKKIPGSLETRGDPNCHQYFNVHN</sequence>
<organism>
    <name type="scientific">Mus musculus</name>
    <name type="common">Mouse</name>
    <dbReference type="NCBI Taxonomy" id="10090"/>
    <lineage>
        <taxon>Eukaryota</taxon>
        <taxon>Metazoa</taxon>
        <taxon>Chordata</taxon>
        <taxon>Craniata</taxon>
        <taxon>Vertebrata</taxon>
        <taxon>Euteleostomi</taxon>
        <taxon>Mammalia</taxon>
        <taxon>Eutheria</taxon>
        <taxon>Euarchontoglires</taxon>
        <taxon>Glires</taxon>
        <taxon>Rodentia</taxon>
        <taxon>Myomorpha</taxon>
        <taxon>Muroidea</taxon>
        <taxon>Muridae</taxon>
        <taxon>Murinae</taxon>
        <taxon>Mus</taxon>
        <taxon>Mus</taxon>
    </lineage>
</organism>
<comment type="function">
    <text evidence="2 3">Multifunctional protein that plays a critical role in regulating the availability of IGFs such as IGF1 and IGF2 to their receptors and thereby regulates IGF-mediated cellular processes including cell migration, proliferation, differentiation or apoptosis in a cell-type specific manner. Also plays a positive role in cell migration by interacting with integrin ITGA5:ITGB1 through its RGD motif. Mechanistically, binding to integrins leads to activation of focal adhesion kinase/PTK2 and stimulation of the mitogen-activated protein kinase (MAPK) pathway (By similarity). Regulates cardiomyocyte apoptosis by suppressing HIF-1alpha/HIF1A ubiquitination and subsequent degradation (By similarity).</text>
</comment>
<comment type="subunit">
    <text evidence="2 3">Binds equally well IGF1 and IGF2. Interacts with integrin ITGA5:ITGB1. Interacts with VHL; this interaction inhibits HIF1A degradation (By similarity).</text>
</comment>
<comment type="subcellular location">
    <subcellularLocation>
        <location evidence="2">Secreted</location>
    </subcellularLocation>
</comment>
<gene>
    <name type="primary">Igfbp1</name>
    <name type="synonym">Igfbp-1</name>
</gene>
<dbReference type="EMBL" id="X81579">
    <property type="protein sequence ID" value="CAA57269.1"/>
    <property type="molecule type" value="mRNA"/>
</dbReference>
<dbReference type="EMBL" id="AL607124">
    <property type="status" value="NOT_ANNOTATED_CDS"/>
    <property type="molecule type" value="Genomic_DNA"/>
</dbReference>
<dbReference type="EMBL" id="CH466574">
    <property type="protein sequence ID" value="EDL40608.1"/>
    <property type="molecule type" value="Genomic_DNA"/>
</dbReference>
<dbReference type="EMBL" id="X67493">
    <property type="protein sequence ID" value="CAA47832.1"/>
    <property type="molecule type" value="Genomic_DNA"/>
</dbReference>
<dbReference type="CCDS" id="CCDS24427.1"/>
<dbReference type="PIR" id="I48600">
    <property type="entry name" value="I48600"/>
</dbReference>
<dbReference type="PIR" id="S25113">
    <property type="entry name" value="S25113"/>
</dbReference>
<dbReference type="RefSeq" id="NP_032367.3">
    <property type="nucleotide sequence ID" value="NM_008341.4"/>
</dbReference>
<dbReference type="SMR" id="P47876"/>
<dbReference type="DIP" id="DIP-60631N"/>
<dbReference type="FunCoup" id="P47876">
    <property type="interactions" value="161"/>
</dbReference>
<dbReference type="IntAct" id="P47876">
    <property type="interactions" value="2"/>
</dbReference>
<dbReference type="STRING" id="10090.ENSMUSP00000020704"/>
<dbReference type="MEROPS" id="I31.951"/>
<dbReference type="iPTMnet" id="P47876"/>
<dbReference type="PhosphoSitePlus" id="P47876"/>
<dbReference type="PaxDb" id="10090-ENSMUSP00000020704"/>
<dbReference type="PeptideAtlas" id="P47876"/>
<dbReference type="ProteomicsDB" id="273250"/>
<dbReference type="Antibodypedia" id="3841">
    <property type="antibodies" value="691 antibodies from 38 providers"/>
</dbReference>
<dbReference type="DNASU" id="16006"/>
<dbReference type="Ensembl" id="ENSMUST00000020704.8">
    <property type="protein sequence ID" value="ENSMUSP00000020704.8"/>
    <property type="gene ID" value="ENSMUSG00000020429.8"/>
</dbReference>
<dbReference type="GeneID" id="16006"/>
<dbReference type="KEGG" id="mmu:16006"/>
<dbReference type="UCSC" id="uc007hzh.2">
    <property type="organism name" value="mouse"/>
</dbReference>
<dbReference type="AGR" id="MGI:96436"/>
<dbReference type="CTD" id="3484"/>
<dbReference type="MGI" id="MGI:96436">
    <property type="gene designation" value="Igfbp1"/>
</dbReference>
<dbReference type="VEuPathDB" id="HostDB:ENSMUSG00000020429"/>
<dbReference type="eggNOG" id="ENOG502QWRP">
    <property type="taxonomic scope" value="Eukaryota"/>
</dbReference>
<dbReference type="GeneTree" id="ENSGT00940000157394"/>
<dbReference type="HOGENOM" id="CLU_070833_3_0_1"/>
<dbReference type="InParanoid" id="P47876"/>
<dbReference type="OMA" id="TRGDPNC"/>
<dbReference type="OrthoDB" id="9926277at2759"/>
<dbReference type="PhylomeDB" id="P47876"/>
<dbReference type="TreeFam" id="TF331211"/>
<dbReference type="Reactome" id="R-MMU-381426">
    <property type="pathway name" value="Regulation of Insulin-like Growth Factor (IGF) transport and uptake by Insulin-like Growth Factor Binding Proteins (IGFBPs)"/>
</dbReference>
<dbReference type="Reactome" id="R-MMU-8957275">
    <property type="pathway name" value="Post-translational protein phosphorylation"/>
</dbReference>
<dbReference type="BioGRID-ORCS" id="16006">
    <property type="hits" value="2 hits in 79 CRISPR screens"/>
</dbReference>
<dbReference type="ChiTaRS" id="Igfbp1">
    <property type="organism name" value="mouse"/>
</dbReference>
<dbReference type="PRO" id="PR:P47876"/>
<dbReference type="Proteomes" id="UP000000589">
    <property type="component" value="Chromosome 11"/>
</dbReference>
<dbReference type="RNAct" id="P47876">
    <property type="molecule type" value="protein"/>
</dbReference>
<dbReference type="Bgee" id="ENSMUSG00000020429">
    <property type="expression patterns" value="Expressed in left lobe of liver and 40 other cell types or tissues"/>
</dbReference>
<dbReference type="GO" id="GO:0005615">
    <property type="term" value="C:extracellular space"/>
    <property type="evidence" value="ECO:0000314"/>
    <property type="project" value="MGI"/>
</dbReference>
<dbReference type="GO" id="GO:0005794">
    <property type="term" value="C:Golgi apparatus"/>
    <property type="evidence" value="ECO:0007669"/>
    <property type="project" value="Ensembl"/>
</dbReference>
<dbReference type="GO" id="GO:0005520">
    <property type="term" value="F:insulin-like growth factor binding"/>
    <property type="evidence" value="ECO:0000353"/>
    <property type="project" value="MGI"/>
</dbReference>
<dbReference type="GO" id="GO:0031994">
    <property type="term" value="F:insulin-like growth factor I binding"/>
    <property type="evidence" value="ECO:0007669"/>
    <property type="project" value="Ensembl"/>
</dbReference>
<dbReference type="GO" id="GO:0031995">
    <property type="term" value="F:insulin-like growth factor II binding"/>
    <property type="evidence" value="ECO:0007669"/>
    <property type="project" value="Ensembl"/>
</dbReference>
<dbReference type="GO" id="GO:0008286">
    <property type="term" value="P:insulin receptor signaling pathway"/>
    <property type="evidence" value="ECO:0007669"/>
    <property type="project" value="Ensembl"/>
</dbReference>
<dbReference type="GO" id="GO:0030307">
    <property type="term" value="P:positive regulation of cell growth"/>
    <property type="evidence" value="ECO:0007669"/>
    <property type="project" value="Ensembl"/>
</dbReference>
<dbReference type="GO" id="GO:0032868">
    <property type="term" value="P:response to insulin"/>
    <property type="evidence" value="ECO:0000314"/>
    <property type="project" value="MGI"/>
</dbReference>
<dbReference type="GO" id="GO:0042246">
    <property type="term" value="P:tissue regeneration"/>
    <property type="evidence" value="ECO:0007669"/>
    <property type="project" value="Ensembl"/>
</dbReference>
<dbReference type="CDD" id="cd00191">
    <property type="entry name" value="TY"/>
    <property type="match status" value="1"/>
</dbReference>
<dbReference type="FunFam" id="4.10.40.20:FF:000001">
    <property type="entry name" value="Insulin-like growth factor binding protein 5"/>
    <property type="match status" value="1"/>
</dbReference>
<dbReference type="FunFam" id="4.10.800.10:FF:000002">
    <property type="entry name" value="Insulin-like growth factor-binding protein 2"/>
    <property type="match status" value="1"/>
</dbReference>
<dbReference type="Gene3D" id="4.10.40.20">
    <property type="match status" value="1"/>
</dbReference>
<dbReference type="Gene3D" id="4.10.800.10">
    <property type="entry name" value="Thyroglobulin type-1"/>
    <property type="match status" value="1"/>
</dbReference>
<dbReference type="InterPro" id="IPR009030">
    <property type="entry name" value="Growth_fac_rcpt_cys_sf"/>
</dbReference>
<dbReference type="InterPro" id="IPR000867">
    <property type="entry name" value="IGFBP-like"/>
</dbReference>
<dbReference type="InterPro" id="IPR022322">
    <property type="entry name" value="IGFBP1"/>
</dbReference>
<dbReference type="InterPro" id="IPR022321">
    <property type="entry name" value="IGFBP_1-6_chordata"/>
</dbReference>
<dbReference type="InterPro" id="IPR017891">
    <property type="entry name" value="Insulin_GF-bd_Cys-rich_CS"/>
</dbReference>
<dbReference type="InterPro" id="IPR000716">
    <property type="entry name" value="Thyroglobulin_1"/>
</dbReference>
<dbReference type="InterPro" id="IPR036857">
    <property type="entry name" value="Thyroglobulin_1_sf"/>
</dbReference>
<dbReference type="PANTHER" id="PTHR11551">
    <property type="entry name" value="INSULIN-LIKE GROWTH FACTOR BINDING PROTEIN"/>
    <property type="match status" value="1"/>
</dbReference>
<dbReference type="PANTHER" id="PTHR11551:SF6">
    <property type="entry name" value="INSULIN-LIKE GROWTH FACTOR-BINDING PROTEIN 1"/>
    <property type="match status" value="1"/>
</dbReference>
<dbReference type="Pfam" id="PF00219">
    <property type="entry name" value="IGFBP"/>
    <property type="match status" value="1"/>
</dbReference>
<dbReference type="Pfam" id="PF00086">
    <property type="entry name" value="Thyroglobulin_1"/>
    <property type="match status" value="1"/>
</dbReference>
<dbReference type="PRINTS" id="PR01976">
    <property type="entry name" value="IGFBPFAMILY"/>
</dbReference>
<dbReference type="PRINTS" id="PR01977">
    <property type="entry name" value="IGFBPFAMILY1"/>
</dbReference>
<dbReference type="SMART" id="SM00121">
    <property type="entry name" value="IB"/>
    <property type="match status" value="1"/>
</dbReference>
<dbReference type="SMART" id="SM00211">
    <property type="entry name" value="TY"/>
    <property type="match status" value="1"/>
</dbReference>
<dbReference type="SUPFAM" id="SSF57184">
    <property type="entry name" value="Growth factor receptor domain"/>
    <property type="match status" value="1"/>
</dbReference>
<dbReference type="SUPFAM" id="SSF57610">
    <property type="entry name" value="Thyroglobulin type-1 domain"/>
    <property type="match status" value="1"/>
</dbReference>
<dbReference type="PROSITE" id="PS00222">
    <property type="entry name" value="IGFBP_N_1"/>
    <property type="match status" value="1"/>
</dbReference>
<dbReference type="PROSITE" id="PS51323">
    <property type="entry name" value="IGFBP_N_2"/>
    <property type="match status" value="1"/>
</dbReference>
<dbReference type="PROSITE" id="PS00484">
    <property type="entry name" value="THYROGLOBULIN_1_1"/>
    <property type="match status" value="1"/>
</dbReference>
<dbReference type="PROSITE" id="PS51162">
    <property type="entry name" value="THYROGLOBULIN_1_2"/>
    <property type="match status" value="1"/>
</dbReference>
<name>IBP1_MOUSE</name>